<gene>
    <name evidence="1" type="primary">plsX</name>
    <name type="ordered locus">lhv_1393</name>
</gene>
<feature type="chain" id="PRO_1000070990" description="Phosphate acyltransferase">
    <location>
        <begin position="1"/>
        <end position="333"/>
    </location>
</feature>
<sequence>MRTIAIDAMGGDNAPEAIVEAVLKAKAEMPDTKFLLFGDKEQLRKLIPSDQINDQLGVVATTEIIADEDEPVKAIRRKKDSSMVVAANFVKEGKADALLSLGNTGALLACGIFIIGRIKGIARPGLMPTLPVQNSDDGFNMVDVGANAKSKPEFLLQWAEMASYYAEKIRGIQNPRIMLLNNGSESDKGDDVHQAAYELLKDSDLNFQGNIEGNELLLGKADVVVTDGFTGNAVLKNIEGTSSFILHILKDSLLNGGVMTKLGALMVNGSLSSLKSKFDTAKYGGAILLGVNAPVVKTHGRSNESPIYFTLKQVDKMIKENLVQDFKDEFATK</sequence>
<accession>A8YVV0</accession>
<comment type="function">
    <text evidence="1">Catalyzes the reversible formation of acyl-phosphate (acyl-PO(4)) from acyl-[acyl-carrier-protein] (acyl-ACP). This enzyme utilizes acyl-ACP as fatty acyl donor, but not acyl-CoA.</text>
</comment>
<comment type="catalytic activity">
    <reaction evidence="1">
        <text>a fatty acyl-[ACP] + phosphate = an acyl phosphate + holo-[ACP]</text>
        <dbReference type="Rhea" id="RHEA:42292"/>
        <dbReference type="Rhea" id="RHEA-COMP:9685"/>
        <dbReference type="Rhea" id="RHEA-COMP:14125"/>
        <dbReference type="ChEBI" id="CHEBI:43474"/>
        <dbReference type="ChEBI" id="CHEBI:59918"/>
        <dbReference type="ChEBI" id="CHEBI:64479"/>
        <dbReference type="ChEBI" id="CHEBI:138651"/>
        <dbReference type="EC" id="2.3.1.274"/>
    </reaction>
</comment>
<comment type="pathway">
    <text evidence="1">Lipid metabolism; phospholipid metabolism.</text>
</comment>
<comment type="subunit">
    <text evidence="1">Homodimer. Probably interacts with PlsY.</text>
</comment>
<comment type="subcellular location">
    <subcellularLocation>
        <location evidence="1">Cytoplasm</location>
    </subcellularLocation>
    <text evidence="1">Associated with the membrane possibly through PlsY.</text>
</comment>
<comment type="similarity">
    <text evidence="1">Belongs to the PlsX family.</text>
</comment>
<keyword id="KW-0963">Cytoplasm</keyword>
<keyword id="KW-0444">Lipid biosynthesis</keyword>
<keyword id="KW-0443">Lipid metabolism</keyword>
<keyword id="KW-0594">Phospholipid biosynthesis</keyword>
<keyword id="KW-1208">Phospholipid metabolism</keyword>
<keyword id="KW-0808">Transferase</keyword>
<evidence type="ECO:0000255" key="1">
    <source>
        <dbReference type="HAMAP-Rule" id="MF_00019"/>
    </source>
</evidence>
<reference key="1">
    <citation type="journal article" date="2008" name="J. Bacteriol.">
        <title>Genome sequence of Lactobacillus helveticus: an organism distinguished by selective gene loss and IS element expansion.</title>
        <authorList>
            <person name="Callanan M."/>
            <person name="Kaleta P."/>
            <person name="O'Callaghan J."/>
            <person name="O'Sullivan O."/>
            <person name="Jordan K."/>
            <person name="McAuliffe O."/>
            <person name="Sangrador-Vegas A."/>
            <person name="Slattery L."/>
            <person name="Fitzgerald G.F."/>
            <person name="Beresford T."/>
            <person name="Ross R.P."/>
        </authorList>
    </citation>
    <scope>NUCLEOTIDE SEQUENCE [LARGE SCALE GENOMIC DNA]</scope>
    <source>
        <strain>DPC 4571</strain>
    </source>
</reference>
<organism>
    <name type="scientific">Lactobacillus helveticus (strain DPC 4571)</name>
    <dbReference type="NCBI Taxonomy" id="405566"/>
    <lineage>
        <taxon>Bacteria</taxon>
        <taxon>Bacillati</taxon>
        <taxon>Bacillota</taxon>
        <taxon>Bacilli</taxon>
        <taxon>Lactobacillales</taxon>
        <taxon>Lactobacillaceae</taxon>
        <taxon>Lactobacillus</taxon>
    </lineage>
</organism>
<proteinExistence type="inferred from homology"/>
<name>PLSX_LACH4</name>
<dbReference type="EC" id="2.3.1.274" evidence="1"/>
<dbReference type="EMBL" id="CP000517">
    <property type="protein sequence ID" value="ABX27380.1"/>
    <property type="molecule type" value="Genomic_DNA"/>
</dbReference>
<dbReference type="RefSeq" id="WP_012212018.1">
    <property type="nucleotide sequence ID" value="NC_010080.1"/>
</dbReference>
<dbReference type="SMR" id="A8YVV0"/>
<dbReference type="KEGG" id="lhe:lhv_1393"/>
<dbReference type="eggNOG" id="COG0416">
    <property type="taxonomic scope" value="Bacteria"/>
</dbReference>
<dbReference type="HOGENOM" id="CLU_039379_1_1_9"/>
<dbReference type="UniPathway" id="UPA00085"/>
<dbReference type="Proteomes" id="UP000000790">
    <property type="component" value="Chromosome"/>
</dbReference>
<dbReference type="GO" id="GO:0005737">
    <property type="term" value="C:cytoplasm"/>
    <property type="evidence" value="ECO:0007669"/>
    <property type="project" value="UniProtKB-SubCell"/>
</dbReference>
<dbReference type="GO" id="GO:0043811">
    <property type="term" value="F:phosphate:acyl-[acyl carrier protein] acyltransferase activity"/>
    <property type="evidence" value="ECO:0007669"/>
    <property type="project" value="UniProtKB-UniRule"/>
</dbReference>
<dbReference type="GO" id="GO:0006633">
    <property type="term" value="P:fatty acid biosynthetic process"/>
    <property type="evidence" value="ECO:0007669"/>
    <property type="project" value="UniProtKB-UniRule"/>
</dbReference>
<dbReference type="GO" id="GO:0008654">
    <property type="term" value="P:phospholipid biosynthetic process"/>
    <property type="evidence" value="ECO:0007669"/>
    <property type="project" value="UniProtKB-KW"/>
</dbReference>
<dbReference type="Gene3D" id="3.40.718.10">
    <property type="entry name" value="Isopropylmalate Dehydrogenase"/>
    <property type="match status" value="1"/>
</dbReference>
<dbReference type="HAMAP" id="MF_00019">
    <property type="entry name" value="PlsX"/>
    <property type="match status" value="1"/>
</dbReference>
<dbReference type="InterPro" id="IPR003664">
    <property type="entry name" value="FA_synthesis"/>
</dbReference>
<dbReference type="InterPro" id="IPR012281">
    <property type="entry name" value="Phospholipid_synth_PlsX-like"/>
</dbReference>
<dbReference type="NCBIfam" id="TIGR00182">
    <property type="entry name" value="plsX"/>
    <property type="match status" value="1"/>
</dbReference>
<dbReference type="PANTHER" id="PTHR30100">
    <property type="entry name" value="FATTY ACID/PHOSPHOLIPID SYNTHESIS PROTEIN PLSX"/>
    <property type="match status" value="1"/>
</dbReference>
<dbReference type="PANTHER" id="PTHR30100:SF1">
    <property type="entry name" value="PHOSPHATE ACYLTRANSFERASE"/>
    <property type="match status" value="1"/>
</dbReference>
<dbReference type="Pfam" id="PF02504">
    <property type="entry name" value="FA_synthesis"/>
    <property type="match status" value="1"/>
</dbReference>
<dbReference type="PIRSF" id="PIRSF002465">
    <property type="entry name" value="Phsphlp_syn_PlsX"/>
    <property type="match status" value="1"/>
</dbReference>
<dbReference type="SUPFAM" id="SSF53659">
    <property type="entry name" value="Isocitrate/Isopropylmalate dehydrogenase-like"/>
    <property type="match status" value="1"/>
</dbReference>
<protein>
    <recommendedName>
        <fullName evidence="1">Phosphate acyltransferase</fullName>
        <ecNumber evidence="1">2.3.1.274</ecNumber>
    </recommendedName>
    <alternativeName>
        <fullName evidence="1">Acyl-ACP phosphotransacylase</fullName>
    </alternativeName>
    <alternativeName>
        <fullName evidence="1">Acyl-[acyl-carrier-protein]--phosphate acyltransferase</fullName>
    </alternativeName>
    <alternativeName>
        <fullName evidence="1">Phosphate-acyl-ACP acyltransferase</fullName>
    </alternativeName>
</protein>